<proteinExistence type="inferred from homology"/>
<dbReference type="EMBL" id="CP000312">
    <property type="protein sequence ID" value="ABG87028.1"/>
    <property type="molecule type" value="Genomic_DNA"/>
</dbReference>
<dbReference type="RefSeq" id="WP_003470452.1">
    <property type="nucleotide sequence ID" value="NZ_CAXVKH010000001.1"/>
</dbReference>
<dbReference type="SMR" id="Q0SSC0"/>
<dbReference type="GeneID" id="93001762"/>
<dbReference type="KEGG" id="cpr:CPR_1672"/>
<dbReference type="Proteomes" id="UP000001824">
    <property type="component" value="Chromosome"/>
</dbReference>
<dbReference type="GO" id="GO:0022627">
    <property type="term" value="C:cytosolic small ribosomal subunit"/>
    <property type="evidence" value="ECO:0007669"/>
    <property type="project" value="TreeGrafter"/>
</dbReference>
<dbReference type="GO" id="GO:0003735">
    <property type="term" value="F:structural constituent of ribosome"/>
    <property type="evidence" value="ECO:0007669"/>
    <property type="project" value="InterPro"/>
</dbReference>
<dbReference type="GO" id="GO:0006412">
    <property type="term" value="P:translation"/>
    <property type="evidence" value="ECO:0007669"/>
    <property type="project" value="UniProtKB-UniRule"/>
</dbReference>
<dbReference type="CDD" id="cd01425">
    <property type="entry name" value="RPS2"/>
    <property type="match status" value="1"/>
</dbReference>
<dbReference type="FunFam" id="1.10.287.610:FF:000001">
    <property type="entry name" value="30S ribosomal protein S2"/>
    <property type="match status" value="1"/>
</dbReference>
<dbReference type="Gene3D" id="3.40.50.10490">
    <property type="entry name" value="Glucose-6-phosphate isomerase like protein, domain 1"/>
    <property type="match status" value="1"/>
</dbReference>
<dbReference type="Gene3D" id="1.10.287.610">
    <property type="entry name" value="Helix hairpin bin"/>
    <property type="match status" value="1"/>
</dbReference>
<dbReference type="HAMAP" id="MF_00291_B">
    <property type="entry name" value="Ribosomal_uS2_B"/>
    <property type="match status" value="1"/>
</dbReference>
<dbReference type="InterPro" id="IPR001865">
    <property type="entry name" value="Ribosomal_uS2"/>
</dbReference>
<dbReference type="InterPro" id="IPR005706">
    <property type="entry name" value="Ribosomal_uS2_bac/mit/plastid"/>
</dbReference>
<dbReference type="InterPro" id="IPR018130">
    <property type="entry name" value="Ribosomal_uS2_CS"/>
</dbReference>
<dbReference type="InterPro" id="IPR023591">
    <property type="entry name" value="Ribosomal_uS2_flav_dom_sf"/>
</dbReference>
<dbReference type="NCBIfam" id="TIGR01011">
    <property type="entry name" value="rpsB_bact"/>
    <property type="match status" value="1"/>
</dbReference>
<dbReference type="PANTHER" id="PTHR12534">
    <property type="entry name" value="30S RIBOSOMAL PROTEIN S2 PROKARYOTIC AND ORGANELLAR"/>
    <property type="match status" value="1"/>
</dbReference>
<dbReference type="PANTHER" id="PTHR12534:SF0">
    <property type="entry name" value="SMALL RIBOSOMAL SUBUNIT PROTEIN US2M"/>
    <property type="match status" value="1"/>
</dbReference>
<dbReference type="Pfam" id="PF00318">
    <property type="entry name" value="Ribosomal_S2"/>
    <property type="match status" value="1"/>
</dbReference>
<dbReference type="PRINTS" id="PR00395">
    <property type="entry name" value="RIBOSOMALS2"/>
</dbReference>
<dbReference type="SUPFAM" id="SSF52313">
    <property type="entry name" value="Ribosomal protein S2"/>
    <property type="match status" value="1"/>
</dbReference>
<dbReference type="PROSITE" id="PS00962">
    <property type="entry name" value="RIBOSOMAL_S2_1"/>
    <property type="match status" value="1"/>
</dbReference>
<accession>Q0SSC0</accession>
<comment type="similarity">
    <text evidence="1">Belongs to the universal ribosomal protein uS2 family.</text>
</comment>
<protein>
    <recommendedName>
        <fullName evidence="1">Small ribosomal subunit protein uS2</fullName>
    </recommendedName>
    <alternativeName>
        <fullName evidence="2">30S ribosomal protein S2</fullName>
    </alternativeName>
</protein>
<evidence type="ECO:0000255" key="1">
    <source>
        <dbReference type="HAMAP-Rule" id="MF_00291"/>
    </source>
</evidence>
<evidence type="ECO:0000305" key="2"/>
<reference key="1">
    <citation type="journal article" date="2006" name="Genome Res.">
        <title>Skewed genomic variability in strains of the toxigenic bacterial pathogen, Clostridium perfringens.</title>
        <authorList>
            <person name="Myers G.S.A."/>
            <person name="Rasko D.A."/>
            <person name="Cheung J.K."/>
            <person name="Ravel J."/>
            <person name="Seshadri R."/>
            <person name="DeBoy R.T."/>
            <person name="Ren Q."/>
            <person name="Varga J."/>
            <person name="Awad M.M."/>
            <person name="Brinkac L.M."/>
            <person name="Daugherty S.C."/>
            <person name="Haft D.H."/>
            <person name="Dodson R.J."/>
            <person name="Madupu R."/>
            <person name="Nelson W.C."/>
            <person name="Rosovitz M.J."/>
            <person name="Sullivan S.A."/>
            <person name="Khouri H."/>
            <person name="Dimitrov G.I."/>
            <person name="Watkins K.L."/>
            <person name="Mulligan S."/>
            <person name="Benton J."/>
            <person name="Radune D."/>
            <person name="Fisher D.J."/>
            <person name="Atkins H.S."/>
            <person name="Hiscox T."/>
            <person name="Jost B.H."/>
            <person name="Billington S.J."/>
            <person name="Songer J.G."/>
            <person name="McClane B.A."/>
            <person name="Titball R.W."/>
            <person name="Rood J.I."/>
            <person name="Melville S.B."/>
            <person name="Paulsen I.T."/>
        </authorList>
    </citation>
    <scope>NUCLEOTIDE SEQUENCE [LARGE SCALE GENOMIC DNA]</scope>
    <source>
        <strain>SM101 / Type A</strain>
    </source>
</reference>
<feature type="chain" id="PRO_1000003939" description="Small ribosomal subunit protein uS2">
    <location>
        <begin position="1"/>
        <end position="233"/>
    </location>
</feature>
<sequence>MSVISMKQLLEAGVHFGHQTRRWNPKMAPYIFTERNGIYIIDLQKTVKKAEEAYNFIREVSEAGKDVIFVGTKKQAQEAVKEEAERSNMYFVNHRWLGGMLTNFTTIKTRINRLNKLDEMEQDGTFDVLPKKEVIKLKLEREKLQRNLGGIKELDASNIGAMFVVDPRKEKNAIAEAKILGIPVVAIVDTNCDPEEVDYVIPGNDDAIRAVKLIAGKMADAIIEGRQGEQLAE</sequence>
<name>RS2_CLOPS</name>
<organism>
    <name type="scientific">Clostridium perfringens (strain SM101 / Type A)</name>
    <dbReference type="NCBI Taxonomy" id="289380"/>
    <lineage>
        <taxon>Bacteria</taxon>
        <taxon>Bacillati</taxon>
        <taxon>Bacillota</taxon>
        <taxon>Clostridia</taxon>
        <taxon>Eubacteriales</taxon>
        <taxon>Clostridiaceae</taxon>
        <taxon>Clostridium</taxon>
    </lineage>
</organism>
<gene>
    <name evidence="1" type="primary">rpsB</name>
    <name type="ordered locus">CPR_1672</name>
</gene>
<keyword id="KW-0687">Ribonucleoprotein</keyword>
<keyword id="KW-0689">Ribosomal protein</keyword>